<proteinExistence type="inferred from homology"/>
<organism>
    <name type="scientific">Syzygium anisatum</name>
    <name type="common">Aniseed myrtle</name>
    <name type="synonym">Anetholea anisata</name>
    <dbReference type="NCBI Taxonomy" id="178109"/>
    <lineage>
        <taxon>Eukaryota</taxon>
        <taxon>Viridiplantae</taxon>
        <taxon>Streptophyta</taxon>
        <taxon>Embryophyta</taxon>
        <taxon>Tracheophyta</taxon>
        <taxon>Spermatophyta</taxon>
        <taxon>Magnoliopsida</taxon>
        <taxon>eudicotyledons</taxon>
        <taxon>Gunneridae</taxon>
        <taxon>Pentapetalae</taxon>
        <taxon>rosids</taxon>
        <taxon>malvids</taxon>
        <taxon>Myrtales</taxon>
        <taxon>Myrtaceae</taxon>
        <taxon>Myrtoideae</taxon>
        <taxon>Syzygieae</taxon>
        <taxon>Syzygium</taxon>
    </lineage>
</organism>
<keyword id="KW-0150">Chloroplast</keyword>
<keyword id="KW-0507">mRNA processing</keyword>
<keyword id="KW-0934">Plastid</keyword>
<keyword id="KW-0694">RNA-binding</keyword>
<keyword id="KW-0819">tRNA processing</keyword>
<reference key="1">
    <citation type="journal article" date="2005" name="Plant Syst. Evol.">
        <title>Relationships within Myrtaceae sensu lato based on a matK phylogeny.</title>
        <authorList>
            <person name="Wilson P.G."/>
            <person name="O'Brien M.M."/>
            <person name="Heslewood M.M."/>
            <person name="Quinn C.J."/>
        </authorList>
    </citation>
    <scope>NUCLEOTIDE SEQUENCE [GENOMIC DNA]</scope>
</reference>
<dbReference type="EMBL" id="AF368195">
    <property type="protein sequence ID" value="AAL37563.1"/>
    <property type="molecule type" value="Genomic_DNA"/>
</dbReference>
<dbReference type="GO" id="GO:0009507">
    <property type="term" value="C:chloroplast"/>
    <property type="evidence" value="ECO:0007669"/>
    <property type="project" value="UniProtKB-SubCell"/>
</dbReference>
<dbReference type="GO" id="GO:0003723">
    <property type="term" value="F:RNA binding"/>
    <property type="evidence" value="ECO:0007669"/>
    <property type="project" value="UniProtKB-KW"/>
</dbReference>
<dbReference type="GO" id="GO:0006397">
    <property type="term" value="P:mRNA processing"/>
    <property type="evidence" value="ECO:0007669"/>
    <property type="project" value="UniProtKB-KW"/>
</dbReference>
<dbReference type="GO" id="GO:0008380">
    <property type="term" value="P:RNA splicing"/>
    <property type="evidence" value="ECO:0007669"/>
    <property type="project" value="UniProtKB-UniRule"/>
</dbReference>
<dbReference type="GO" id="GO:0008033">
    <property type="term" value="P:tRNA processing"/>
    <property type="evidence" value="ECO:0007669"/>
    <property type="project" value="UniProtKB-KW"/>
</dbReference>
<dbReference type="HAMAP" id="MF_01390">
    <property type="entry name" value="MatK"/>
    <property type="match status" value="1"/>
</dbReference>
<dbReference type="InterPro" id="IPR024937">
    <property type="entry name" value="Domain_X"/>
</dbReference>
<dbReference type="InterPro" id="IPR002866">
    <property type="entry name" value="Maturase_MatK"/>
</dbReference>
<dbReference type="InterPro" id="IPR024942">
    <property type="entry name" value="Maturase_MatK_N"/>
</dbReference>
<dbReference type="PANTHER" id="PTHR34811">
    <property type="entry name" value="MATURASE K"/>
    <property type="match status" value="1"/>
</dbReference>
<dbReference type="PANTHER" id="PTHR34811:SF1">
    <property type="entry name" value="MATURASE K"/>
    <property type="match status" value="1"/>
</dbReference>
<dbReference type="Pfam" id="PF01348">
    <property type="entry name" value="Intron_maturas2"/>
    <property type="match status" value="1"/>
</dbReference>
<dbReference type="Pfam" id="PF01824">
    <property type="entry name" value="MatK_N"/>
    <property type="match status" value="1"/>
</dbReference>
<accession>Q8WJ37</accession>
<name>MATK_SYZAN</name>
<gene>
    <name evidence="1" type="primary">matK</name>
</gene>
<geneLocation type="chloroplast"/>
<comment type="function">
    <text evidence="1">Usually encoded in the trnK tRNA gene intron. Probably assists in splicing its own and other chloroplast group II introns.</text>
</comment>
<comment type="subcellular location">
    <subcellularLocation>
        <location>Plastid</location>
        <location>Chloroplast</location>
    </subcellularLocation>
</comment>
<comment type="similarity">
    <text evidence="1">Belongs to the intron maturase 2 family. MatK subfamily.</text>
</comment>
<feature type="chain" id="PRO_0000143235" description="Maturase K">
    <location>
        <begin position="1"/>
        <end position="503"/>
    </location>
</feature>
<evidence type="ECO:0000255" key="1">
    <source>
        <dbReference type="HAMAP-Rule" id="MF_01390"/>
    </source>
</evidence>
<protein>
    <recommendedName>
        <fullName evidence="1">Maturase K</fullName>
    </recommendedName>
    <alternativeName>
        <fullName evidence="1">Intron maturase</fullName>
    </alternativeName>
</protein>
<sequence length="503" mass="59917">MEEFQGYFELDRSRQHDFLYPLLFREYIYALAHDHGLNRSILFENAGYDKKSSSIIVKRLITRMYQQNPLIFSANDSIQNPFFGHNKNLYSQIISEGFAVIVEIPFSLRLVSSLERKEIAKSHNLRSIHSIFPFLEDKFSHLDYVSDVLIPYHIHLEISVQTLRYWVKDASSLHLLRFFLHEYWNSLITPKKHITLFSKGNPRLFLFLYNSHICEYESIFLFLRNQSSHLRSTSSGIFFERIYFYVKIEHFAKVFFDNDFQCILWFFKDPFMHYVRYQGKSILALKDTPLLMNKWKYYLVTLWQYHFYAWFQPGRIDINQLCKYSLDFLGYRSSVRLNSSVVRSQILENSFLINNAMKKFETIVPIIPLIGSLSKANFCNTLGHPISKPTRADSSDSDIIDRFLRICRNLSHYHSGSSKKKSLYRVKYILRLSCVKTLARKHKRTVRTFLKRLGSEFLEEFLTEEEVVLSLIFPRTYSTSRRLYRGQIWYFDITSINDLVNYE</sequence>